<organism>
    <name type="scientific">Thermococcus kodakarensis (strain ATCC BAA-918 / JCM 12380 / KOD1)</name>
    <name type="common">Pyrococcus kodakaraensis (strain KOD1)</name>
    <dbReference type="NCBI Taxonomy" id="69014"/>
    <lineage>
        <taxon>Archaea</taxon>
        <taxon>Methanobacteriati</taxon>
        <taxon>Methanobacteriota</taxon>
        <taxon>Thermococci</taxon>
        <taxon>Thermococcales</taxon>
        <taxon>Thermococcaceae</taxon>
        <taxon>Thermococcus</taxon>
    </lineage>
</organism>
<gene>
    <name evidence="1" type="primary">gap</name>
    <name type="ordered locus">TK0765</name>
</gene>
<accession>Q5JHB5</accession>
<protein>
    <recommendedName>
        <fullName evidence="1">Glyceraldehyde-3-phosphate dehydrogenase</fullName>
        <shortName evidence="1">GAPDH</shortName>
        <ecNumber evidence="1">1.2.1.59</ecNumber>
    </recommendedName>
    <alternativeName>
        <fullName evidence="1">NAD(P)-dependent glyceraldehyde-3-phosphate dehydrogenase</fullName>
    </alternativeName>
</protein>
<dbReference type="EC" id="1.2.1.59" evidence="1"/>
<dbReference type="EMBL" id="AP006878">
    <property type="protein sequence ID" value="BAD84954.1"/>
    <property type="molecule type" value="Genomic_DNA"/>
</dbReference>
<dbReference type="RefSeq" id="WP_011249716.1">
    <property type="nucleotide sequence ID" value="NC_006624.1"/>
</dbReference>
<dbReference type="SMR" id="Q5JHB5"/>
<dbReference type="FunCoup" id="Q5JHB5">
    <property type="interactions" value="108"/>
</dbReference>
<dbReference type="STRING" id="69014.TK0765"/>
<dbReference type="EnsemblBacteria" id="BAD84954">
    <property type="protein sequence ID" value="BAD84954"/>
    <property type="gene ID" value="TK0765"/>
</dbReference>
<dbReference type="GeneID" id="78447280"/>
<dbReference type="KEGG" id="tko:TK0765"/>
<dbReference type="PATRIC" id="fig|69014.16.peg.745"/>
<dbReference type="eggNOG" id="arCOG00493">
    <property type="taxonomic scope" value="Archaea"/>
</dbReference>
<dbReference type="HOGENOM" id="CLU_069533_0_0_2"/>
<dbReference type="InParanoid" id="Q5JHB5"/>
<dbReference type="OrthoDB" id="295712at2157"/>
<dbReference type="PhylomeDB" id="Q5JHB5"/>
<dbReference type="UniPathway" id="UPA00109">
    <property type="reaction ID" value="UER00184"/>
</dbReference>
<dbReference type="Proteomes" id="UP000000536">
    <property type="component" value="Chromosome"/>
</dbReference>
<dbReference type="GO" id="GO:0005737">
    <property type="term" value="C:cytoplasm"/>
    <property type="evidence" value="ECO:0007669"/>
    <property type="project" value="UniProtKB-SubCell"/>
</dbReference>
<dbReference type="GO" id="GO:0008839">
    <property type="term" value="F:4-hydroxy-tetrahydrodipicolinate reductase"/>
    <property type="evidence" value="ECO:0007669"/>
    <property type="project" value="InterPro"/>
</dbReference>
<dbReference type="GO" id="GO:0004365">
    <property type="term" value="F:glyceraldehyde-3-phosphate dehydrogenase (NAD+) (phosphorylating) activity"/>
    <property type="evidence" value="ECO:0007669"/>
    <property type="project" value="UniProtKB-UniRule"/>
</dbReference>
<dbReference type="GO" id="GO:0047100">
    <property type="term" value="F:glyceraldehyde-3-phosphate dehydrogenase (NADP+) (phosphorylating) activity"/>
    <property type="evidence" value="ECO:0007669"/>
    <property type="project" value="RHEA"/>
</dbReference>
<dbReference type="GO" id="GO:0051287">
    <property type="term" value="F:NAD binding"/>
    <property type="evidence" value="ECO:0007669"/>
    <property type="project" value="InterPro"/>
</dbReference>
<dbReference type="GO" id="GO:0050661">
    <property type="term" value="F:NADP binding"/>
    <property type="evidence" value="ECO:0007669"/>
    <property type="project" value="InterPro"/>
</dbReference>
<dbReference type="GO" id="GO:0006096">
    <property type="term" value="P:glycolytic process"/>
    <property type="evidence" value="ECO:0007669"/>
    <property type="project" value="UniProtKB-UniRule"/>
</dbReference>
<dbReference type="GO" id="GO:0009089">
    <property type="term" value="P:lysine biosynthetic process via diaminopimelate"/>
    <property type="evidence" value="ECO:0007669"/>
    <property type="project" value="InterPro"/>
</dbReference>
<dbReference type="CDD" id="cd18127">
    <property type="entry name" value="GAPDH_II_C"/>
    <property type="match status" value="1"/>
</dbReference>
<dbReference type="CDD" id="cd02278">
    <property type="entry name" value="GAPDH_II_N"/>
    <property type="match status" value="1"/>
</dbReference>
<dbReference type="Gene3D" id="3.30.360.10">
    <property type="entry name" value="Dihydrodipicolinate Reductase, domain 2"/>
    <property type="match status" value="1"/>
</dbReference>
<dbReference type="Gene3D" id="3.40.50.720">
    <property type="entry name" value="NAD(P)-binding Rossmann-like Domain"/>
    <property type="match status" value="1"/>
</dbReference>
<dbReference type="HAMAP" id="MF_00559">
    <property type="entry name" value="G3P_dehdrog_arch"/>
    <property type="match status" value="1"/>
</dbReference>
<dbReference type="InterPro" id="IPR000846">
    <property type="entry name" value="DapB_N"/>
</dbReference>
<dbReference type="InterPro" id="IPR020831">
    <property type="entry name" value="GlycerAld/Erythrose_P_DH"/>
</dbReference>
<dbReference type="InterPro" id="IPR020830">
    <property type="entry name" value="GlycerAld_3-P_DH_AS"/>
</dbReference>
<dbReference type="InterPro" id="IPR020829">
    <property type="entry name" value="GlycerAld_3-P_DH_cat"/>
</dbReference>
<dbReference type="InterPro" id="IPR020828">
    <property type="entry name" value="GlycerAld_3-P_DH_NAD(P)-bd"/>
</dbReference>
<dbReference type="InterPro" id="IPR006436">
    <property type="entry name" value="Glyceraldehyde-3-P_DH_2_arc"/>
</dbReference>
<dbReference type="InterPro" id="IPR036291">
    <property type="entry name" value="NAD(P)-bd_dom_sf"/>
</dbReference>
<dbReference type="NCBIfam" id="TIGR01546">
    <property type="entry name" value="GAPDH-II_archae"/>
    <property type="match status" value="1"/>
</dbReference>
<dbReference type="NCBIfam" id="NF003251">
    <property type="entry name" value="PRK04207.1"/>
    <property type="match status" value="1"/>
</dbReference>
<dbReference type="Pfam" id="PF01113">
    <property type="entry name" value="DapB_N"/>
    <property type="match status" value="1"/>
</dbReference>
<dbReference type="Pfam" id="PF02800">
    <property type="entry name" value="Gp_dh_C"/>
    <property type="match status" value="1"/>
</dbReference>
<dbReference type="PIRSF" id="PIRSF000149">
    <property type="entry name" value="GAP_DH"/>
    <property type="match status" value="1"/>
</dbReference>
<dbReference type="SMART" id="SM00846">
    <property type="entry name" value="Gp_dh_N"/>
    <property type="match status" value="1"/>
</dbReference>
<dbReference type="SUPFAM" id="SSF55347">
    <property type="entry name" value="Glyceraldehyde-3-phosphate dehydrogenase-like, C-terminal domain"/>
    <property type="match status" value="1"/>
</dbReference>
<dbReference type="SUPFAM" id="SSF51735">
    <property type="entry name" value="NAD(P)-binding Rossmann-fold domains"/>
    <property type="match status" value="1"/>
</dbReference>
<dbReference type="PROSITE" id="PS00071">
    <property type="entry name" value="GAPDH"/>
    <property type="match status" value="1"/>
</dbReference>
<proteinExistence type="inferred from homology"/>
<name>G3P_THEKO</name>
<feature type="chain" id="PRO_0000145732" description="Glyceraldehyde-3-phosphate dehydrogenase">
    <location>
        <begin position="1"/>
        <end position="334"/>
    </location>
</feature>
<feature type="active site" description="Nucleophile" evidence="1">
    <location>
        <position position="141"/>
    </location>
</feature>
<feature type="binding site" evidence="1">
    <location>
        <begin position="12"/>
        <end position="13"/>
    </location>
    <ligand>
        <name>NAD(+)</name>
        <dbReference type="ChEBI" id="CHEBI:57540"/>
    </ligand>
</feature>
<feature type="binding site" evidence="1">
    <location>
        <position position="111"/>
    </location>
    <ligand>
        <name>NAD(+)</name>
        <dbReference type="ChEBI" id="CHEBI:57540"/>
    </ligand>
</feature>
<feature type="binding site" evidence="1">
    <location>
        <begin position="140"/>
        <end position="142"/>
    </location>
    <ligand>
        <name>D-glyceraldehyde 3-phosphate</name>
        <dbReference type="ChEBI" id="CHEBI:59776"/>
    </ligand>
</feature>
<feature type="binding site" evidence="1">
    <location>
        <position position="167"/>
    </location>
    <ligand>
        <name>NAD(+)</name>
        <dbReference type="ChEBI" id="CHEBI:57540"/>
    </ligand>
</feature>
<feature type="binding site" evidence="1">
    <location>
        <begin position="192"/>
        <end position="193"/>
    </location>
    <ligand>
        <name>D-glyceraldehyde 3-phosphate</name>
        <dbReference type="ChEBI" id="CHEBI:59776"/>
    </ligand>
</feature>
<feature type="binding site" evidence="1">
    <location>
        <position position="298"/>
    </location>
    <ligand>
        <name>NAD(+)</name>
        <dbReference type="ChEBI" id="CHEBI:57540"/>
    </ligand>
</feature>
<sequence>MKVKVGINGYGTIGKRVAYAVSKQDDMELIGVTKTKPDFEAYLARERGIPVYAASEEFLPRFEKAGFEVAGTLSDLLENVDVIVDATPGGMGAKNKALYEKAGVKAIFQGGEKAEVAQVSFVAQANYEKALGKDYVRVVSCNTTGLTRTLSALQEYIDYVYAVMIRRAADPNDSKRGPVNAITPSVTVPSHHGPDVQTVIPINIETMAFVVPTTLMHVHSVMIELKKPITREDVIDIFENTTRVLLFEKERGFESTAQLIEFARDLHREWNNLYEIAVWKESISVKGNRLFYIQAVHQESDVVPENVDAIRAMFEMADKWESIRKTNKSLGILK</sequence>
<comment type="catalytic activity">
    <reaction evidence="1">
        <text>D-glyceraldehyde 3-phosphate + phosphate + NADP(+) = (2R)-3-phospho-glyceroyl phosphate + NADPH + H(+)</text>
        <dbReference type="Rhea" id="RHEA:10296"/>
        <dbReference type="ChEBI" id="CHEBI:15378"/>
        <dbReference type="ChEBI" id="CHEBI:43474"/>
        <dbReference type="ChEBI" id="CHEBI:57604"/>
        <dbReference type="ChEBI" id="CHEBI:57783"/>
        <dbReference type="ChEBI" id="CHEBI:58349"/>
        <dbReference type="ChEBI" id="CHEBI:59776"/>
        <dbReference type="EC" id="1.2.1.59"/>
    </reaction>
</comment>
<comment type="catalytic activity">
    <reaction evidence="1">
        <text>D-glyceraldehyde 3-phosphate + phosphate + NAD(+) = (2R)-3-phospho-glyceroyl phosphate + NADH + H(+)</text>
        <dbReference type="Rhea" id="RHEA:10300"/>
        <dbReference type="ChEBI" id="CHEBI:15378"/>
        <dbReference type="ChEBI" id="CHEBI:43474"/>
        <dbReference type="ChEBI" id="CHEBI:57540"/>
        <dbReference type="ChEBI" id="CHEBI:57604"/>
        <dbReference type="ChEBI" id="CHEBI:57945"/>
        <dbReference type="ChEBI" id="CHEBI:59776"/>
        <dbReference type="EC" id="1.2.1.59"/>
    </reaction>
</comment>
<comment type="pathway">
    <text evidence="1">Carbohydrate degradation; glycolysis; pyruvate from D-glyceraldehyde 3-phosphate: step 1/5.</text>
</comment>
<comment type="subunit">
    <text evidence="1">Homotetramer.</text>
</comment>
<comment type="subcellular location">
    <subcellularLocation>
        <location evidence="1">Cytoplasm</location>
    </subcellularLocation>
</comment>
<comment type="similarity">
    <text evidence="1">Belongs to the glyceraldehyde-3-phosphate dehydrogenase family.</text>
</comment>
<reference key="1">
    <citation type="journal article" date="2005" name="Genome Res.">
        <title>Complete genome sequence of the hyperthermophilic archaeon Thermococcus kodakaraensis KOD1 and comparison with Pyrococcus genomes.</title>
        <authorList>
            <person name="Fukui T."/>
            <person name="Atomi H."/>
            <person name="Kanai T."/>
            <person name="Matsumi R."/>
            <person name="Fujiwara S."/>
            <person name="Imanaka T."/>
        </authorList>
    </citation>
    <scope>NUCLEOTIDE SEQUENCE [LARGE SCALE GENOMIC DNA]</scope>
    <source>
        <strain>ATCC BAA-918 / JCM 12380 / KOD1</strain>
    </source>
</reference>
<keyword id="KW-0963">Cytoplasm</keyword>
<keyword id="KW-0324">Glycolysis</keyword>
<keyword id="KW-0520">NAD</keyword>
<keyword id="KW-0521">NADP</keyword>
<keyword id="KW-0560">Oxidoreductase</keyword>
<keyword id="KW-1185">Reference proteome</keyword>
<evidence type="ECO:0000255" key="1">
    <source>
        <dbReference type="HAMAP-Rule" id="MF_00559"/>
    </source>
</evidence>